<reference key="1">
    <citation type="journal article" date="2003" name="Plant Syst. Evol.">
        <title>The chloroplast genome of the 'basal' angiosperm Calycanthus fertilis -- structural and phylogenetic analyses.</title>
        <authorList>
            <person name="Goremykin V."/>
            <person name="Hirsch-Ernst K.I."/>
            <person name="Woelfl S."/>
            <person name="Hellwig F.H."/>
        </authorList>
    </citation>
    <scope>NUCLEOTIDE SEQUENCE [LARGE SCALE GENOMIC DNA]</scope>
</reference>
<dbReference type="EMBL" id="AJ428413">
    <property type="protein sequence ID" value="CAD28751.1"/>
    <property type="molecule type" value="Genomic_DNA"/>
</dbReference>
<dbReference type="RefSeq" id="NP_862784.1">
    <property type="nucleotide sequence ID" value="NC_004993.1"/>
</dbReference>
<dbReference type="SMR" id="Q7YJU7"/>
<dbReference type="GeneID" id="2597997"/>
<dbReference type="GO" id="GO:0009535">
    <property type="term" value="C:chloroplast thylakoid membrane"/>
    <property type="evidence" value="ECO:0007669"/>
    <property type="project" value="UniProtKB-SubCell"/>
</dbReference>
<dbReference type="GO" id="GO:0045158">
    <property type="term" value="F:electron transporter, transferring electrons within cytochrome b6/f complex of photosystem II activity"/>
    <property type="evidence" value="ECO:0007669"/>
    <property type="project" value="UniProtKB-UniRule"/>
</dbReference>
<dbReference type="GO" id="GO:0045156">
    <property type="term" value="F:electron transporter, transferring electrons within the cyclic electron transport pathway of photosynthesis activity"/>
    <property type="evidence" value="ECO:0007669"/>
    <property type="project" value="InterPro"/>
</dbReference>
<dbReference type="GO" id="GO:0016491">
    <property type="term" value="F:oxidoreductase activity"/>
    <property type="evidence" value="ECO:0007669"/>
    <property type="project" value="InterPro"/>
</dbReference>
<dbReference type="GO" id="GO:0009767">
    <property type="term" value="P:photosynthetic electron transport chain"/>
    <property type="evidence" value="ECO:0007669"/>
    <property type="project" value="InterPro"/>
</dbReference>
<dbReference type="CDD" id="cd00290">
    <property type="entry name" value="cytochrome_b_C"/>
    <property type="match status" value="1"/>
</dbReference>
<dbReference type="FunFam" id="1.10.287.980:FF:000001">
    <property type="entry name" value="Cytochrome b6-f complex subunit 4"/>
    <property type="match status" value="1"/>
</dbReference>
<dbReference type="FunFam" id="1.20.5.510:FF:000002">
    <property type="entry name" value="Cytochrome b6-f complex subunit 4"/>
    <property type="match status" value="1"/>
</dbReference>
<dbReference type="Gene3D" id="1.10.287.980">
    <property type="entry name" value="plastocyanin oxidoreductase"/>
    <property type="match status" value="1"/>
</dbReference>
<dbReference type="Gene3D" id="1.20.5.510">
    <property type="entry name" value="Single helix bin"/>
    <property type="match status" value="1"/>
</dbReference>
<dbReference type="HAMAP" id="MF_01344">
    <property type="entry name" value="Cytb6_f_subIV"/>
    <property type="match status" value="1"/>
</dbReference>
<dbReference type="InterPro" id="IPR005798">
    <property type="entry name" value="Cyt_b/b6_C"/>
</dbReference>
<dbReference type="InterPro" id="IPR036150">
    <property type="entry name" value="Cyt_b/b6_C_sf"/>
</dbReference>
<dbReference type="InterPro" id="IPR005870">
    <property type="entry name" value="Cyt_b6/f_cplx_suIV"/>
</dbReference>
<dbReference type="InterPro" id="IPR048260">
    <property type="entry name" value="Cytochrome_b_C_euk/bac"/>
</dbReference>
<dbReference type="NCBIfam" id="TIGR01156">
    <property type="entry name" value="cytb6_f_IV"/>
    <property type="match status" value="1"/>
</dbReference>
<dbReference type="PANTHER" id="PTHR19271">
    <property type="entry name" value="CYTOCHROME B"/>
    <property type="match status" value="1"/>
</dbReference>
<dbReference type="PANTHER" id="PTHR19271:SF40">
    <property type="entry name" value="CYTOCHROME B"/>
    <property type="match status" value="1"/>
</dbReference>
<dbReference type="Pfam" id="PF00032">
    <property type="entry name" value="Cytochrom_B_C"/>
    <property type="match status" value="1"/>
</dbReference>
<dbReference type="PIRSF" id="PIRSF000033">
    <property type="entry name" value="B6f_17K"/>
    <property type="match status" value="1"/>
</dbReference>
<dbReference type="SUPFAM" id="SSF81648">
    <property type="entry name" value="a domain/subunit of cytochrome bc1 complex (Ubiquinol-cytochrome c reductase)"/>
    <property type="match status" value="1"/>
</dbReference>
<dbReference type="PROSITE" id="PS51003">
    <property type="entry name" value="CYTB_CTER"/>
    <property type="match status" value="1"/>
</dbReference>
<comment type="function">
    <text evidence="2">Component of the cytochrome b6-f complex, which mediates electron transfer between photosystem II (PSII) and photosystem I (PSI), cyclic electron flow around PSI, and state transitions.</text>
</comment>
<comment type="subunit">
    <text evidence="1">The 4 large subunits of the cytochrome b6-f complex are cytochrome b6, subunit IV (17 kDa polypeptide, petD), cytochrome f and the Rieske protein, while the 4 small subunits are petG, petL, petM and petN. The complex functions as a dimer (By similarity).</text>
</comment>
<comment type="subcellular location">
    <subcellularLocation>
        <location evidence="2">Plastid</location>
        <location evidence="2">Chloroplast thylakoid membrane</location>
        <topology evidence="2">Multi-pass membrane protein</topology>
    </subcellularLocation>
</comment>
<comment type="similarity">
    <text evidence="2">Belongs to the cytochrome b family. PetD subfamily.</text>
</comment>
<organism>
    <name type="scientific">Calycanthus floridus var. glaucus</name>
    <name type="common">Eastern sweetshrub</name>
    <name type="synonym">Calycanthus fertilis var. ferax</name>
    <dbReference type="NCBI Taxonomy" id="212734"/>
    <lineage>
        <taxon>Eukaryota</taxon>
        <taxon>Viridiplantae</taxon>
        <taxon>Streptophyta</taxon>
        <taxon>Embryophyta</taxon>
        <taxon>Tracheophyta</taxon>
        <taxon>Spermatophyta</taxon>
        <taxon>Magnoliopsida</taxon>
        <taxon>Magnoliidae</taxon>
        <taxon>Laurales</taxon>
        <taxon>Calycanthaceae</taxon>
        <taxon>Calycanthus</taxon>
    </lineage>
</organism>
<keyword id="KW-0150">Chloroplast</keyword>
<keyword id="KW-0249">Electron transport</keyword>
<keyword id="KW-0472">Membrane</keyword>
<keyword id="KW-0602">Photosynthesis</keyword>
<keyword id="KW-0934">Plastid</keyword>
<keyword id="KW-0793">Thylakoid</keyword>
<keyword id="KW-0812">Transmembrane</keyword>
<keyword id="KW-1133">Transmembrane helix</keyword>
<keyword id="KW-0813">Transport</keyword>
<evidence type="ECO:0000250" key="1"/>
<evidence type="ECO:0000255" key="2">
    <source>
        <dbReference type="HAMAP-Rule" id="MF_01344"/>
    </source>
</evidence>
<accession>Q7YJU7</accession>
<gene>
    <name evidence="2" type="primary">petD</name>
</gene>
<protein>
    <recommendedName>
        <fullName evidence="2">Cytochrome b6-f complex subunit 4</fullName>
    </recommendedName>
    <alternativeName>
        <fullName evidence="2">17 kDa polypeptide</fullName>
    </alternativeName>
</protein>
<sequence length="167" mass="18239">MGVTKKPDLNDPVLRAKLAKGMGHNYYGEPAWPNDLLYISPVVILGTIACNVGLAVLEPSMIGEPADPFATPLEILPEWYFFPVFQILRTVPNKLLGVLLMVLVPTGLLTVPFLENVNKFQNPFRRPVATTVFLIGTAVALWLGIGATLPIDKSLTLGLFQVDLTVK</sequence>
<feature type="chain" id="PRO_0000061848" description="Cytochrome b6-f complex subunit 4">
    <location>
        <begin position="1"/>
        <end position="167"/>
    </location>
</feature>
<feature type="transmembrane region" description="Helical" evidence="2">
    <location>
        <begin position="36"/>
        <end position="56"/>
    </location>
</feature>
<feature type="transmembrane region" description="Helical" evidence="2">
    <location>
        <begin position="95"/>
        <end position="115"/>
    </location>
</feature>
<feature type="transmembrane region" description="Helical" evidence="2">
    <location>
        <begin position="131"/>
        <end position="151"/>
    </location>
</feature>
<proteinExistence type="inferred from homology"/>
<geneLocation type="chloroplast"/>
<name>PETD_CALFG</name>